<evidence type="ECO:0000255" key="1">
    <source>
        <dbReference type="HAMAP-Rule" id="MF_00291"/>
    </source>
</evidence>
<evidence type="ECO:0000256" key="2">
    <source>
        <dbReference type="SAM" id="MobiDB-lite"/>
    </source>
</evidence>
<evidence type="ECO:0000305" key="3"/>
<sequence length="275" mass="30151">MPQVTMRQMLEAGVHFGHQTRYWNPKLAPYIFGARGKIHIINLEKTVPLFNDAMNFLSSIAQKRGTVLFLGTKRSARESIKEEAERCNMPFMTQRWLGGTLTNFRTVKQSVARLKELEAAETDGTFEKLVKHEVLGLRREREKLDASLGGIKEMNRLPDAIFVIDIGHEDIAIKEAKKLGIPVIAVVDTNYDPALVDYAIPGNDDAIRAVQLYARAAADAVLEGKAAAPNSASVREEEFSAEAGDEGKGRRAPAKKATEKKADAPAAAPEAPAAE</sequence>
<protein>
    <recommendedName>
        <fullName evidence="1">Small ribosomal subunit protein uS2</fullName>
    </recommendedName>
    <alternativeName>
        <fullName evidence="3">30S ribosomal protein S2</fullName>
    </alternativeName>
</protein>
<proteinExistence type="inferred from homology"/>
<organism>
    <name type="scientific">Xanthomonas campestris pv. campestris (strain ATCC 33913 / DSM 3586 / NCPPB 528 / LMG 568 / P 25)</name>
    <dbReference type="NCBI Taxonomy" id="190485"/>
    <lineage>
        <taxon>Bacteria</taxon>
        <taxon>Pseudomonadati</taxon>
        <taxon>Pseudomonadota</taxon>
        <taxon>Gammaproteobacteria</taxon>
        <taxon>Lysobacterales</taxon>
        <taxon>Lysobacteraceae</taxon>
        <taxon>Xanthomonas</taxon>
    </lineage>
</organism>
<dbReference type="EMBL" id="AE008922">
    <property type="protein sequence ID" value="AAM40673.1"/>
    <property type="molecule type" value="Genomic_DNA"/>
</dbReference>
<dbReference type="RefSeq" id="NP_636749.1">
    <property type="nucleotide sequence ID" value="NC_003902.1"/>
</dbReference>
<dbReference type="RefSeq" id="WP_011036567.1">
    <property type="nucleotide sequence ID" value="NC_003902.1"/>
</dbReference>
<dbReference type="SMR" id="Q8PAV2"/>
<dbReference type="STRING" id="190485.XCC1375"/>
<dbReference type="EnsemblBacteria" id="AAM40673">
    <property type="protein sequence ID" value="AAM40673"/>
    <property type="gene ID" value="XCC1375"/>
</dbReference>
<dbReference type="KEGG" id="xcc:XCC1375"/>
<dbReference type="PATRIC" id="fig|190485.4.peg.1477"/>
<dbReference type="eggNOG" id="COG0052">
    <property type="taxonomic scope" value="Bacteria"/>
</dbReference>
<dbReference type="HOGENOM" id="CLU_040318_1_2_6"/>
<dbReference type="OrthoDB" id="9808036at2"/>
<dbReference type="Proteomes" id="UP000001010">
    <property type="component" value="Chromosome"/>
</dbReference>
<dbReference type="GO" id="GO:0022627">
    <property type="term" value="C:cytosolic small ribosomal subunit"/>
    <property type="evidence" value="ECO:0000318"/>
    <property type="project" value="GO_Central"/>
</dbReference>
<dbReference type="GO" id="GO:0003735">
    <property type="term" value="F:structural constituent of ribosome"/>
    <property type="evidence" value="ECO:0000318"/>
    <property type="project" value="GO_Central"/>
</dbReference>
<dbReference type="GO" id="GO:0006412">
    <property type="term" value="P:translation"/>
    <property type="evidence" value="ECO:0007669"/>
    <property type="project" value="UniProtKB-UniRule"/>
</dbReference>
<dbReference type="CDD" id="cd01425">
    <property type="entry name" value="RPS2"/>
    <property type="match status" value="1"/>
</dbReference>
<dbReference type="FunFam" id="1.10.287.610:FF:000001">
    <property type="entry name" value="30S ribosomal protein S2"/>
    <property type="match status" value="1"/>
</dbReference>
<dbReference type="Gene3D" id="3.40.50.10490">
    <property type="entry name" value="Glucose-6-phosphate isomerase like protein, domain 1"/>
    <property type="match status" value="1"/>
</dbReference>
<dbReference type="Gene3D" id="1.10.287.610">
    <property type="entry name" value="Helix hairpin bin"/>
    <property type="match status" value="1"/>
</dbReference>
<dbReference type="HAMAP" id="MF_00291_B">
    <property type="entry name" value="Ribosomal_uS2_B"/>
    <property type="match status" value="1"/>
</dbReference>
<dbReference type="InterPro" id="IPR001865">
    <property type="entry name" value="Ribosomal_uS2"/>
</dbReference>
<dbReference type="InterPro" id="IPR005706">
    <property type="entry name" value="Ribosomal_uS2_bac/mit/plastid"/>
</dbReference>
<dbReference type="InterPro" id="IPR018130">
    <property type="entry name" value="Ribosomal_uS2_CS"/>
</dbReference>
<dbReference type="InterPro" id="IPR023591">
    <property type="entry name" value="Ribosomal_uS2_flav_dom_sf"/>
</dbReference>
<dbReference type="NCBIfam" id="TIGR01011">
    <property type="entry name" value="rpsB_bact"/>
    <property type="match status" value="1"/>
</dbReference>
<dbReference type="PANTHER" id="PTHR12534">
    <property type="entry name" value="30S RIBOSOMAL PROTEIN S2 PROKARYOTIC AND ORGANELLAR"/>
    <property type="match status" value="1"/>
</dbReference>
<dbReference type="PANTHER" id="PTHR12534:SF0">
    <property type="entry name" value="SMALL RIBOSOMAL SUBUNIT PROTEIN US2M"/>
    <property type="match status" value="1"/>
</dbReference>
<dbReference type="Pfam" id="PF00318">
    <property type="entry name" value="Ribosomal_S2"/>
    <property type="match status" value="1"/>
</dbReference>
<dbReference type="PRINTS" id="PR00395">
    <property type="entry name" value="RIBOSOMALS2"/>
</dbReference>
<dbReference type="SUPFAM" id="SSF52313">
    <property type="entry name" value="Ribosomal protein S2"/>
    <property type="match status" value="1"/>
</dbReference>
<dbReference type="PROSITE" id="PS00962">
    <property type="entry name" value="RIBOSOMAL_S2_1"/>
    <property type="match status" value="1"/>
</dbReference>
<dbReference type="PROSITE" id="PS00963">
    <property type="entry name" value="RIBOSOMAL_S2_2"/>
    <property type="match status" value="1"/>
</dbReference>
<comment type="similarity">
    <text evidence="1">Belongs to the universal ribosomal protein uS2 family.</text>
</comment>
<feature type="chain" id="PRO_0000134279" description="Small ribosomal subunit protein uS2">
    <location>
        <begin position="1"/>
        <end position="275"/>
    </location>
</feature>
<feature type="region of interest" description="Disordered" evidence="2">
    <location>
        <begin position="226"/>
        <end position="275"/>
    </location>
</feature>
<feature type="compositionally biased region" description="Low complexity" evidence="2">
    <location>
        <begin position="264"/>
        <end position="275"/>
    </location>
</feature>
<gene>
    <name evidence="1" type="primary">rpsB</name>
    <name type="ordered locus">XCC1375</name>
</gene>
<keyword id="KW-1185">Reference proteome</keyword>
<keyword id="KW-0687">Ribonucleoprotein</keyword>
<keyword id="KW-0689">Ribosomal protein</keyword>
<accession>Q8PAV2</accession>
<name>RS2_XANCP</name>
<reference key="1">
    <citation type="journal article" date="2002" name="Nature">
        <title>Comparison of the genomes of two Xanthomonas pathogens with differing host specificities.</title>
        <authorList>
            <person name="da Silva A.C.R."/>
            <person name="Ferro J.A."/>
            <person name="Reinach F.C."/>
            <person name="Farah C.S."/>
            <person name="Furlan L.R."/>
            <person name="Quaggio R.B."/>
            <person name="Monteiro-Vitorello C.B."/>
            <person name="Van Sluys M.A."/>
            <person name="Almeida N.F. Jr."/>
            <person name="Alves L.M.C."/>
            <person name="do Amaral A.M."/>
            <person name="Bertolini M.C."/>
            <person name="Camargo L.E.A."/>
            <person name="Camarotte G."/>
            <person name="Cannavan F."/>
            <person name="Cardozo J."/>
            <person name="Chambergo F."/>
            <person name="Ciapina L.P."/>
            <person name="Cicarelli R.M.B."/>
            <person name="Coutinho L.L."/>
            <person name="Cursino-Santos J.R."/>
            <person name="El-Dorry H."/>
            <person name="Faria J.B."/>
            <person name="Ferreira A.J.S."/>
            <person name="Ferreira R.C.C."/>
            <person name="Ferro M.I.T."/>
            <person name="Formighieri E.F."/>
            <person name="Franco M.C."/>
            <person name="Greggio C.C."/>
            <person name="Gruber A."/>
            <person name="Katsuyama A.M."/>
            <person name="Kishi L.T."/>
            <person name="Leite R.P."/>
            <person name="Lemos E.G.M."/>
            <person name="Lemos M.V.F."/>
            <person name="Locali E.C."/>
            <person name="Machado M.A."/>
            <person name="Madeira A.M.B.N."/>
            <person name="Martinez-Rossi N.M."/>
            <person name="Martins E.C."/>
            <person name="Meidanis J."/>
            <person name="Menck C.F.M."/>
            <person name="Miyaki C.Y."/>
            <person name="Moon D.H."/>
            <person name="Moreira L.M."/>
            <person name="Novo M.T.M."/>
            <person name="Okura V.K."/>
            <person name="Oliveira M.C."/>
            <person name="Oliveira V.R."/>
            <person name="Pereira H.A."/>
            <person name="Rossi A."/>
            <person name="Sena J.A.D."/>
            <person name="Silva C."/>
            <person name="de Souza R.F."/>
            <person name="Spinola L.A.F."/>
            <person name="Takita M.A."/>
            <person name="Tamura R.E."/>
            <person name="Teixeira E.C."/>
            <person name="Tezza R.I.D."/>
            <person name="Trindade dos Santos M."/>
            <person name="Truffi D."/>
            <person name="Tsai S.M."/>
            <person name="White F.F."/>
            <person name="Setubal J.C."/>
            <person name="Kitajima J.P."/>
        </authorList>
    </citation>
    <scope>NUCLEOTIDE SEQUENCE [LARGE SCALE GENOMIC DNA]</scope>
    <source>
        <strain>ATCC 33913 / DSM 3586 / NCPPB 528 / LMG 568 / P 25</strain>
    </source>
</reference>